<accession>Q5RKZ7</accession>
<accession>B2RVW8</accession>
<accession>B7ZWI5</accession>
<accession>Q8R058</accession>
<accession>Q9JL32</accession>
<accession>Q9JL33</accession>
<evidence type="ECO:0000250" key="1"/>
<evidence type="ECO:0000250" key="2">
    <source>
        <dbReference type="UniProtKB" id="P69848"/>
    </source>
</evidence>
<evidence type="ECO:0000250" key="3">
    <source>
        <dbReference type="UniProtKB" id="Q9NZB8"/>
    </source>
</evidence>
<evidence type="ECO:0000255" key="4"/>
<evidence type="ECO:0000255" key="5">
    <source>
        <dbReference type="PROSITE-ProRule" id="PRU01266"/>
    </source>
</evidence>
<evidence type="ECO:0000256" key="6">
    <source>
        <dbReference type="SAM" id="MobiDB-lite"/>
    </source>
</evidence>
<evidence type="ECO:0000269" key="7">
    <source>
    </source>
</evidence>
<evidence type="ECO:0000269" key="8">
    <source>
    </source>
</evidence>
<evidence type="ECO:0000269" key="9">
    <source>
    </source>
</evidence>
<evidence type="ECO:0000303" key="10">
    <source>
    </source>
</evidence>
<evidence type="ECO:0000303" key="11">
    <source>
    </source>
</evidence>
<evidence type="ECO:0000305" key="12"/>
<evidence type="ECO:0007744" key="13">
    <source>
    </source>
</evidence>
<feature type="chain" id="PRO_0000369400" description="Molybdenum cofactor biosynthesis protein 1">
    <location>
        <begin position="1"/>
        <end position="636"/>
    </location>
</feature>
<feature type="domain" description="Radical SAM core" evidence="5">
    <location>
        <begin position="64"/>
        <end position="279"/>
    </location>
</feature>
<feature type="region of interest" description="Molybdenum cofactor biosynthesis protein A">
    <location>
        <begin position="1"/>
        <end position="383"/>
    </location>
</feature>
<feature type="region of interest" description="Disordered" evidence="6">
    <location>
        <begin position="19"/>
        <end position="40"/>
    </location>
</feature>
<feature type="region of interest" description="Molybdenum cofactor biosynthesis protein C">
    <location>
        <begin position="414"/>
        <end position="636"/>
    </location>
</feature>
<feature type="region of interest" description="Disordered" evidence="6">
    <location>
        <begin position="444"/>
        <end position="484"/>
    </location>
</feature>
<feature type="active site" description="For molybdenum cofactor biosynthesis protein C activity" evidence="4">
    <location>
        <position position="606"/>
    </location>
</feature>
<feature type="binding site" evidence="1">
    <location>
        <position position="73"/>
    </location>
    <ligand>
        <name>GTP</name>
        <dbReference type="ChEBI" id="CHEBI:37565"/>
    </ligand>
</feature>
<feature type="binding site" evidence="1">
    <location>
        <position position="80"/>
    </location>
    <ligand>
        <name>[4Fe-4S] cluster</name>
        <dbReference type="ChEBI" id="CHEBI:49883"/>
        <label>1</label>
        <note>4Fe-4S-S-AdoMet</note>
    </ligand>
</feature>
<feature type="binding site" evidence="1">
    <location>
        <position position="84"/>
    </location>
    <ligand>
        <name>[4Fe-4S] cluster</name>
        <dbReference type="ChEBI" id="CHEBI:49883"/>
        <label>1</label>
        <note>4Fe-4S-S-AdoMet</note>
    </ligand>
</feature>
<feature type="binding site" evidence="1">
    <location>
        <position position="86"/>
    </location>
    <ligand>
        <name>S-adenosyl-L-methionine</name>
        <dbReference type="ChEBI" id="CHEBI:59789"/>
    </ligand>
</feature>
<feature type="binding site" evidence="1">
    <location>
        <position position="87"/>
    </location>
    <ligand>
        <name>[4Fe-4S] cluster</name>
        <dbReference type="ChEBI" id="CHEBI:49883"/>
        <label>1</label>
        <note>4Fe-4S-S-AdoMet</note>
    </ligand>
</feature>
<feature type="binding site" evidence="1">
    <location>
        <position position="123"/>
    </location>
    <ligand>
        <name>GTP</name>
        <dbReference type="ChEBI" id="CHEBI:37565"/>
    </ligand>
</feature>
<feature type="binding site" evidence="1">
    <location>
        <position position="127"/>
    </location>
    <ligand>
        <name>S-adenosyl-L-methionine</name>
        <dbReference type="ChEBI" id="CHEBI:59789"/>
    </ligand>
</feature>
<feature type="binding site" evidence="1">
    <location>
        <position position="154"/>
    </location>
    <ligand>
        <name>GTP</name>
        <dbReference type="ChEBI" id="CHEBI:37565"/>
    </ligand>
</feature>
<feature type="binding site" evidence="1">
    <location>
        <position position="178"/>
    </location>
    <ligand>
        <name>S-adenosyl-L-methionine</name>
        <dbReference type="ChEBI" id="CHEBI:59789"/>
    </ligand>
</feature>
<feature type="binding site" evidence="1">
    <location>
        <position position="215"/>
    </location>
    <ligand>
        <name>GTP</name>
        <dbReference type="ChEBI" id="CHEBI:37565"/>
    </ligand>
</feature>
<feature type="binding site" evidence="1">
    <location>
        <position position="249"/>
    </location>
    <ligand>
        <name>S-adenosyl-L-methionine</name>
        <dbReference type="ChEBI" id="CHEBI:59789"/>
    </ligand>
</feature>
<feature type="binding site" evidence="1">
    <location>
        <position position="312"/>
    </location>
    <ligand>
        <name>[4Fe-4S] cluster</name>
        <dbReference type="ChEBI" id="CHEBI:49883"/>
        <label>2</label>
        <note>4Fe-4S-substrate</note>
    </ligand>
</feature>
<feature type="binding site" evidence="1">
    <location>
        <position position="315"/>
    </location>
    <ligand>
        <name>[4Fe-4S] cluster</name>
        <dbReference type="ChEBI" id="CHEBI:49883"/>
        <label>2</label>
        <note>4Fe-4S-substrate</note>
    </ligand>
</feature>
<feature type="binding site" evidence="1">
    <location>
        <begin position="317"/>
        <end position="319"/>
    </location>
    <ligand>
        <name>GTP</name>
        <dbReference type="ChEBI" id="CHEBI:37565"/>
    </ligand>
</feature>
<feature type="binding site" evidence="1">
    <location>
        <position position="329"/>
    </location>
    <ligand>
        <name>[4Fe-4S] cluster</name>
        <dbReference type="ChEBI" id="CHEBI:49883"/>
        <label>2</label>
        <note>4Fe-4S-substrate</note>
    </ligand>
</feature>
<feature type="modified residue" description="Phosphoserine" evidence="3">
    <location>
        <position position="64"/>
    </location>
</feature>
<feature type="modified residue" description="N6-acetyllysine" evidence="3">
    <location>
        <position position="198"/>
    </location>
</feature>
<feature type="modified residue" description="N6-acetyllysine" evidence="13">
    <location>
        <position position="528"/>
    </location>
</feature>
<feature type="splice variant" id="VSP_036849" description="In isoform 3." evidence="11">
    <location>
        <begin position="1"/>
        <end position="387"/>
    </location>
</feature>
<feature type="splice variant" id="VSP_036850" description="In isoform Mocs1a." evidence="10 11">
    <original>V</original>
    <variation>G</variation>
    <location>
        <position position="385"/>
    </location>
</feature>
<feature type="splice variant" id="VSP_036851" description="In isoform Mocs1a." evidence="10 11">
    <location>
        <begin position="386"/>
        <end position="636"/>
    </location>
</feature>
<feature type="sequence conflict" description="In Ref. 3; AAF67845." evidence="12" ref="3">
    <original>M</original>
    <variation>V</variation>
    <location>
        <position position="267"/>
    </location>
</feature>
<feature type="sequence conflict" description="In Ref. 2; AAH49914." evidence="12" ref="2">
    <original>R</original>
    <variation>Q</variation>
    <location>
        <position position="274"/>
    </location>
</feature>
<feature type="sequence conflict" description="In Ref. 3; AAF67845." evidence="12" ref="3">
    <original>A</original>
    <variation>T</variation>
    <location>
        <position position="289"/>
    </location>
</feature>
<protein>
    <recommendedName>
        <fullName>Molybdenum cofactor biosynthesis protein 1</fullName>
    </recommendedName>
    <domain>
        <recommendedName>
            <fullName>GTP 3',8-cyclase</fullName>
            <ecNumber evidence="2">4.1.99.22</ecNumber>
        </recommendedName>
        <alternativeName>
            <fullName>Molybdenum cofactor biosynthesis protein A</fullName>
        </alternativeName>
    </domain>
    <domain>
        <recommendedName>
            <fullName>Cyclic pyranopterin monophosphate synthase</fullName>
            <ecNumber evidence="3">4.6.1.17</ecNumber>
        </recommendedName>
        <alternativeName>
            <fullName>Molybdenum cofactor biosynthesis protein C</fullName>
        </alternativeName>
    </domain>
</protein>
<gene>
    <name type="primary">Mocs1</name>
</gene>
<sequence>MAARPAFGIVRQLLRSNARGCSSGAPVTQPRPGEPSRPTREGLSLRLQFLQEHAAPFSAFLTDSFGRQHSYLRISLTEKCNLRCQYCMPEEGVPLTPKADLLTTEEILTLARLFVKEGVDKIRLTGGEPLIRPDVVDIVARLHGLEGLRTIGLTTNGINLARLLPRLQQAGLNAVNISLDTLVPAKFEFIVRRKGFHKVMEGIHKAIELGYKPVKVNCVVMRGLNEDELLDFVALTEGLPLDVRFIEYMPFDGNKWNFKKMVSYKEMLDTIRQRWPGLEKLPEEDSSTAKAFKIPGFQGQISFITSMSEHFCGTCNRLRITADGNLKVCLFGNSEVSLRDHLRAGASEEELLRIIGAAVGRKKRQHAGMFNIAQMKNRPMILIGVLLMLQDSPPARWSNFSWDPLRVRNPSARQCLSDQMASLWKRHCIPKALPLSQQCLGSGSPQRHYSSYPDPDTHSKCLSTGSQAPDAPSGPGPTSNQLTHVDSAGRASMVDVGGKPETERVAVASAMVLLGPVAFKLVQQNQLKKGDALVVAQLAGVQAAKLTSQLIPLCHHVALSHVQVHLELDSTRHAVLIQASCRARGPTGVEMEALTSAAMAALTVYDMCKAVSRDIVVTEVKLISKTGGQRGDFHRA</sequence>
<dbReference type="EC" id="4.1.99.22" evidence="2"/>
<dbReference type="EC" id="4.6.1.17" evidence="3"/>
<dbReference type="EMBL" id="AC165258">
    <property type="status" value="NOT_ANNOTATED_CDS"/>
    <property type="molecule type" value="Genomic_DNA"/>
</dbReference>
<dbReference type="EMBL" id="BC027444">
    <property type="protein sequence ID" value="AAH27444.1"/>
    <property type="molecule type" value="mRNA"/>
</dbReference>
<dbReference type="EMBL" id="BC049914">
    <property type="protein sequence ID" value="AAH49914.1"/>
    <property type="molecule type" value="mRNA"/>
</dbReference>
<dbReference type="EMBL" id="BC147411">
    <property type="protein sequence ID" value="AAI47412.1"/>
    <property type="molecule type" value="mRNA"/>
</dbReference>
<dbReference type="EMBL" id="BC147412">
    <property type="protein sequence ID" value="AAI47413.1"/>
    <property type="status" value="ALT_INIT"/>
    <property type="molecule type" value="mRNA"/>
</dbReference>
<dbReference type="EMBL" id="BC172067">
    <property type="protein sequence ID" value="AAI72067.1"/>
    <property type="molecule type" value="mRNA"/>
</dbReference>
<dbReference type="EMBL" id="AF214016">
    <property type="protein sequence ID" value="AAF67845.1"/>
    <property type="molecule type" value="mRNA"/>
</dbReference>
<dbReference type="EMBL" id="AF214016">
    <property type="protein sequence ID" value="AAF67846.1"/>
    <property type="molecule type" value="mRNA"/>
</dbReference>
<dbReference type="CCDS" id="CCDS50143.1">
    <molecule id="Q5RKZ7-1"/>
</dbReference>
<dbReference type="CCDS" id="CCDS57100.1">
    <molecule id="Q5RKZ7-2"/>
</dbReference>
<dbReference type="RefSeq" id="NP_064426.2">
    <molecule id="Q5RKZ7-1"/>
    <property type="nucleotide sequence ID" value="NM_020042.3"/>
</dbReference>
<dbReference type="RefSeq" id="NP_082740.1">
    <molecule id="Q5RKZ7-2"/>
    <property type="nucleotide sequence ID" value="NM_028464.2"/>
</dbReference>
<dbReference type="SMR" id="Q5RKZ7"/>
<dbReference type="BioGRID" id="208152">
    <property type="interactions" value="3"/>
</dbReference>
<dbReference type="FunCoup" id="Q5RKZ7">
    <property type="interactions" value="739"/>
</dbReference>
<dbReference type="STRING" id="10090.ENSMUSP00000133694"/>
<dbReference type="GlyGen" id="Q5RKZ7">
    <property type="glycosylation" value="1 site"/>
</dbReference>
<dbReference type="iPTMnet" id="Q5RKZ7"/>
<dbReference type="PhosphoSitePlus" id="Q5RKZ7"/>
<dbReference type="jPOST" id="Q5RKZ7"/>
<dbReference type="PaxDb" id="10090-ENSMUSP00000133694"/>
<dbReference type="PeptideAtlas" id="Q5RKZ7"/>
<dbReference type="ProteomicsDB" id="290286">
    <molecule id="Q5RKZ7-1"/>
</dbReference>
<dbReference type="ProteomicsDB" id="290287">
    <molecule id="Q5RKZ7-2"/>
</dbReference>
<dbReference type="ProteomicsDB" id="290288">
    <molecule id="Q5RKZ7-3"/>
</dbReference>
<dbReference type="Pumba" id="Q5RKZ7"/>
<dbReference type="Antibodypedia" id="51647">
    <property type="antibodies" value="186 antibodies from 22 providers"/>
</dbReference>
<dbReference type="DNASU" id="56738"/>
<dbReference type="Ensembl" id="ENSMUST00000024797.16">
    <molecule id="Q5RKZ7-2"/>
    <property type="protein sequence ID" value="ENSMUSP00000024797.10"/>
    <property type="gene ID" value="ENSMUSG00000064120.15"/>
</dbReference>
<dbReference type="Ensembl" id="ENSMUST00000173033.8">
    <molecule id="Q5RKZ7-1"/>
    <property type="protein sequence ID" value="ENSMUSP00000133694.2"/>
    <property type="gene ID" value="ENSMUSG00000064120.15"/>
</dbReference>
<dbReference type="GeneID" id="56738"/>
<dbReference type="KEGG" id="mmu:56738"/>
<dbReference type="UCSC" id="uc008cyg.2">
    <molecule id="Q5RKZ7-1"/>
    <property type="organism name" value="mouse"/>
</dbReference>
<dbReference type="UCSC" id="uc008cyh.2">
    <molecule id="Q5RKZ7-2"/>
    <property type="organism name" value="mouse"/>
</dbReference>
<dbReference type="AGR" id="MGI:1928904"/>
<dbReference type="CTD" id="4337"/>
<dbReference type="MGI" id="MGI:1928904">
    <property type="gene designation" value="Mocs1"/>
</dbReference>
<dbReference type="VEuPathDB" id="HostDB:ENSMUSG00000064120"/>
<dbReference type="eggNOG" id="KOG2876">
    <property type="taxonomic scope" value="Eukaryota"/>
</dbReference>
<dbReference type="GeneTree" id="ENSGT00390000016567"/>
<dbReference type="HOGENOM" id="CLU_009273_0_0_1"/>
<dbReference type="InParanoid" id="Q5RKZ7"/>
<dbReference type="OMA" id="QTVHMTS"/>
<dbReference type="OrthoDB" id="429626at2759"/>
<dbReference type="PhylomeDB" id="Q5RKZ7"/>
<dbReference type="TreeFam" id="TF300424"/>
<dbReference type="Reactome" id="R-MMU-947581">
    <property type="pathway name" value="Molybdenum cofactor biosynthesis"/>
</dbReference>
<dbReference type="UniPathway" id="UPA00344"/>
<dbReference type="BioGRID-ORCS" id="56738">
    <property type="hits" value="2 hits in 78 CRISPR screens"/>
</dbReference>
<dbReference type="ChiTaRS" id="Mocs1">
    <property type="organism name" value="mouse"/>
</dbReference>
<dbReference type="PRO" id="PR:Q5RKZ7"/>
<dbReference type="Proteomes" id="UP000000589">
    <property type="component" value="Chromosome 17"/>
</dbReference>
<dbReference type="RNAct" id="Q5RKZ7">
    <property type="molecule type" value="protein"/>
</dbReference>
<dbReference type="Bgee" id="ENSMUSG00000064120">
    <property type="expression patterns" value="Expressed in granulocyte and 105 other cell types or tissues"/>
</dbReference>
<dbReference type="ExpressionAtlas" id="Q5RKZ7">
    <property type="expression patterns" value="baseline and differential"/>
</dbReference>
<dbReference type="GO" id="GO:0005829">
    <property type="term" value="C:cytosol"/>
    <property type="evidence" value="ECO:0000266"/>
    <property type="project" value="MGI"/>
</dbReference>
<dbReference type="GO" id="GO:0051539">
    <property type="term" value="F:4 iron, 4 sulfur cluster binding"/>
    <property type="evidence" value="ECO:0007669"/>
    <property type="project" value="UniProtKB-KW"/>
</dbReference>
<dbReference type="GO" id="GO:0061799">
    <property type="term" value="F:cyclic pyranopterin monophosphate synthase activity"/>
    <property type="evidence" value="ECO:0000315"/>
    <property type="project" value="MGI"/>
</dbReference>
<dbReference type="GO" id="GO:0061798">
    <property type="term" value="F:GTP 3',8'-cyclase activity"/>
    <property type="evidence" value="ECO:0000315"/>
    <property type="project" value="MGI"/>
</dbReference>
<dbReference type="GO" id="GO:0005525">
    <property type="term" value="F:GTP binding"/>
    <property type="evidence" value="ECO:0007669"/>
    <property type="project" value="UniProtKB-KW"/>
</dbReference>
<dbReference type="GO" id="GO:0046872">
    <property type="term" value="F:metal ion binding"/>
    <property type="evidence" value="ECO:0007669"/>
    <property type="project" value="UniProtKB-KW"/>
</dbReference>
<dbReference type="GO" id="GO:1904047">
    <property type="term" value="F:S-adenosyl-L-methionine binding"/>
    <property type="evidence" value="ECO:0000315"/>
    <property type="project" value="MGI"/>
</dbReference>
<dbReference type="GO" id="GO:0006777">
    <property type="term" value="P:Mo-molybdopterin cofactor biosynthetic process"/>
    <property type="evidence" value="ECO:0007669"/>
    <property type="project" value="UniProtKB-KW"/>
</dbReference>
<dbReference type="GO" id="GO:0032324">
    <property type="term" value="P:molybdopterin cofactor biosynthetic process"/>
    <property type="evidence" value="ECO:0000315"/>
    <property type="project" value="MGI"/>
</dbReference>
<dbReference type="CDD" id="cd01420">
    <property type="entry name" value="MoaC_PE"/>
    <property type="match status" value="1"/>
</dbReference>
<dbReference type="CDD" id="cd01335">
    <property type="entry name" value="Radical_SAM"/>
    <property type="match status" value="1"/>
</dbReference>
<dbReference type="CDD" id="cd21117">
    <property type="entry name" value="Twitch_MoaA"/>
    <property type="match status" value="1"/>
</dbReference>
<dbReference type="FunFam" id="3.30.70.640:FF:000002">
    <property type="entry name" value="Molybdenum cofactor biosynthesis protein 1"/>
    <property type="match status" value="1"/>
</dbReference>
<dbReference type="FunFam" id="3.20.20.70:FF:000117">
    <property type="entry name" value="molybdenum cofactor biosynthesis protein 1"/>
    <property type="match status" value="1"/>
</dbReference>
<dbReference type="Gene3D" id="3.20.20.70">
    <property type="entry name" value="Aldolase class I"/>
    <property type="match status" value="1"/>
</dbReference>
<dbReference type="Gene3D" id="3.30.70.640">
    <property type="entry name" value="Molybdopterin cofactor biosynthesis C (MoaC) domain"/>
    <property type="match status" value="1"/>
</dbReference>
<dbReference type="HAMAP" id="MF_01225_B">
    <property type="entry name" value="MoaA_B"/>
    <property type="match status" value="1"/>
</dbReference>
<dbReference type="HAMAP" id="MF_01224_B">
    <property type="entry name" value="MoaC_B"/>
    <property type="match status" value="1"/>
</dbReference>
<dbReference type="InterPro" id="IPR013785">
    <property type="entry name" value="Aldolase_TIM"/>
</dbReference>
<dbReference type="InterPro" id="IPR006638">
    <property type="entry name" value="Elp3/MiaA/NifB-like_rSAM"/>
</dbReference>
<dbReference type="InterPro" id="IPR013483">
    <property type="entry name" value="MoaA"/>
</dbReference>
<dbReference type="InterPro" id="IPR000385">
    <property type="entry name" value="MoaA_NifB_PqqE_Fe-S-bd_CS"/>
</dbReference>
<dbReference type="InterPro" id="IPR010505">
    <property type="entry name" value="MoaA_twitch"/>
</dbReference>
<dbReference type="InterPro" id="IPR023045">
    <property type="entry name" value="MoaC"/>
</dbReference>
<dbReference type="InterPro" id="IPR047594">
    <property type="entry name" value="MoaC_bact/euk"/>
</dbReference>
<dbReference type="InterPro" id="IPR036522">
    <property type="entry name" value="MoaC_sf"/>
</dbReference>
<dbReference type="InterPro" id="IPR050105">
    <property type="entry name" value="MoCo_biosynth_MoaA/MoaC"/>
</dbReference>
<dbReference type="InterPro" id="IPR002820">
    <property type="entry name" value="Mopterin_CF_biosynth-C_dom"/>
</dbReference>
<dbReference type="InterPro" id="IPR007197">
    <property type="entry name" value="rSAM"/>
</dbReference>
<dbReference type="NCBIfam" id="TIGR02666">
    <property type="entry name" value="moaA"/>
    <property type="match status" value="1"/>
</dbReference>
<dbReference type="NCBIfam" id="TIGR00581">
    <property type="entry name" value="moaC"/>
    <property type="match status" value="1"/>
</dbReference>
<dbReference type="NCBIfam" id="NF006870">
    <property type="entry name" value="PRK09364.1"/>
    <property type="match status" value="1"/>
</dbReference>
<dbReference type="PANTHER" id="PTHR22960:SF0">
    <property type="entry name" value="MOLYBDENUM COFACTOR BIOSYNTHESIS PROTEIN 1"/>
    <property type="match status" value="1"/>
</dbReference>
<dbReference type="PANTHER" id="PTHR22960">
    <property type="entry name" value="MOLYBDOPTERIN COFACTOR SYNTHESIS PROTEIN A"/>
    <property type="match status" value="1"/>
</dbReference>
<dbReference type="Pfam" id="PF13353">
    <property type="entry name" value="Fer4_12"/>
    <property type="match status" value="1"/>
</dbReference>
<dbReference type="Pfam" id="PF01967">
    <property type="entry name" value="MoaC"/>
    <property type="match status" value="1"/>
</dbReference>
<dbReference type="Pfam" id="PF06463">
    <property type="entry name" value="Mob_synth_C"/>
    <property type="match status" value="1"/>
</dbReference>
<dbReference type="Pfam" id="PF04055">
    <property type="entry name" value="Radical_SAM"/>
    <property type="match status" value="1"/>
</dbReference>
<dbReference type="SFLD" id="SFLDG01383">
    <property type="entry name" value="cyclic_pyranopterin_phosphate"/>
    <property type="match status" value="1"/>
</dbReference>
<dbReference type="SFLD" id="SFLDG01386">
    <property type="entry name" value="main_SPASM_domain-containing"/>
    <property type="match status" value="1"/>
</dbReference>
<dbReference type="SMART" id="SM00729">
    <property type="entry name" value="Elp3"/>
    <property type="match status" value="1"/>
</dbReference>
<dbReference type="SUPFAM" id="SSF55040">
    <property type="entry name" value="Molybdenum cofactor biosynthesis protein C, MoaC"/>
    <property type="match status" value="1"/>
</dbReference>
<dbReference type="SUPFAM" id="SSF102114">
    <property type="entry name" value="Radical SAM enzymes"/>
    <property type="match status" value="1"/>
</dbReference>
<dbReference type="PROSITE" id="PS01305">
    <property type="entry name" value="MOAA_NIFB_PQQE"/>
    <property type="match status" value="1"/>
</dbReference>
<dbReference type="PROSITE" id="PS51918">
    <property type="entry name" value="RADICAL_SAM"/>
    <property type="match status" value="1"/>
</dbReference>
<comment type="function">
    <text evidence="3">Isoform Mocs1a and isoform Mocs1b probably form a complex that catalyzes the conversion of 5'-GTP to cyclic pyranopterin monophosphate (cPMP). Mocs1a catalyzes the cyclization of GTP to (8S)-3',8-cyclo-7,8-dihydroguanosine 5'-triphosphate and Mocs1b catalyzes the subsequent conversion of (8S)-3',8-cyclo-7,8-dihydroguanosine 5'-triphosphate to cPMP.</text>
</comment>
<comment type="catalytic activity">
    <reaction evidence="2">
        <text>GTP + AH2 + S-adenosyl-L-methionine = (8S)-3',8-cyclo-7,8-dihydroguanosine 5'-triphosphate + 5'-deoxyadenosine + L-methionine + A + H(+)</text>
        <dbReference type="Rhea" id="RHEA:49576"/>
        <dbReference type="ChEBI" id="CHEBI:13193"/>
        <dbReference type="ChEBI" id="CHEBI:15378"/>
        <dbReference type="ChEBI" id="CHEBI:17319"/>
        <dbReference type="ChEBI" id="CHEBI:17499"/>
        <dbReference type="ChEBI" id="CHEBI:37565"/>
        <dbReference type="ChEBI" id="CHEBI:57844"/>
        <dbReference type="ChEBI" id="CHEBI:59789"/>
        <dbReference type="ChEBI" id="CHEBI:131766"/>
        <dbReference type="EC" id="4.1.99.22"/>
    </reaction>
</comment>
<comment type="catalytic activity">
    <reaction evidence="3">
        <text>(8S)-3',8-cyclo-7,8-dihydroguanosine 5'-triphosphate = cyclic pyranopterin phosphate + diphosphate</text>
        <dbReference type="Rhea" id="RHEA:49580"/>
        <dbReference type="ChEBI" id="CHEBI:33019"/>
        <dbReference type="ChEBI" id="CHEBI:59648"/>
        <dbReference type="ChEBI" id="CHEBI:131766"/>
        <dbReference type="EC" id="4.6.1.17"/>
    </reaction>
</comment>
<comment type="cofactor">
    <cofactor evidence="3">
        <name>[4Fe-4S] cluster</name>
        <dbReference type="ChEBI" id="CHEBI:49883"/>
    </cofactor>
    <text evidence="3">Binds 2 [4Fe-4S] clusters. Binds 1 [4Fe-4S] cluster coordinated with 3 cysteines and an exchangeable S-adenosyl-L-methionine and 1 [4Fe-4S] cluster coordinated with 3 cysteines and the GTP-derived substrate.</text>
</comment>
<comment type="pathway">
    <text>Cofactor biosynthesis; molybdopterin biosynthesis.</text>
</comment>
<comment type="subunit">
    <text evidence="3">Isoform Mocs1a and isoform Mocs1b probably form a heterooligomer.</text>
</comment>
<comment type="alternative products">
    <event type="alternative splicing"/>
    <isoform>
        <id>Q5RKZ7-1</id>
        <name>Mocs1b</name>
        <sequence type="displayed"/>
    </isoform>
    <isoform>
        <id>Q5RKZ7-2</id>
        <name>Mocs1a</name>
        <sequence type="described" ref="VSP_036850 VSP_036851"/>
    </isoform>
    <isoform>
        <id>Q5RKZ7-3</id>
        <name>3</name>
        <sequence type="described" ref="VSP_036849"/>
    </isoform>
</comment>
<comment type="disruption phenotype">
    <text evidence="7 8 9">Death between days 1 and 11 after birth, due to a progressive neurological disorder caused by massive cell death. Death is caused by the absence of molybdenum cofactor, resulting in elevated sulfite and diminished sulfate levels throughout the organism. Mice do not possess any sulfite oxidase or xanthine dehydrogenase activity. No organ abnormalities are observed and the synaptic localization of inhibitory receptors appears normal. Long-term rescue results have been obtained in mice lacking Mocs1 thanks to an adeno-associated virus-mediated gene transfer.</text>
</comment>
<comment type="similarity">
    <text evidence="12">In the C-terminal section; belongs to the MoaC family.</text>
</comment>
<comment type="similarity">
    <text evidence="12">In the N-terminal section; belongs to the radical SAM superfamily. MoaA family.</text>
</comment>
<comment type="caution">
    <text evidence="3">The C-terminus of Mocs1a was previously believed to be thiocarboxylated, but it is now known not to be the case.</text>
</comment>
<comment type="sequence caution" evidence="12">
    <conflict type="erroneous initiation">
        <sequence resource="EMBL-CDS" id="AAI47413"/>
    </conflict>
</comment>
<organism>
    <name type="scientific">Mus musculus</name>
    <name type="common">Mouse</name>
    <dbReference type="NCBI Taxonomy" id="10090"/>
    <lineage>
        <taxon>Eukaryota</taxon>
        <taxon>Metazoa</taxon>
        <taxon>Chordata</taxon>
        <taxon>Craniata</taxon>
        <taxon>Vertebrata</taxon>
        <taxon>Euteleostomi</taxon>
        <taxon>Mammalia</taxon>
        <taxon>Eutheria</taxon>
        <taxon>Euarchontoglires</taxon>
        <taxon>Glires</taxon>
        <taxon>Rodentia</taxon>
        <taxon>Myomorpha</taxon>
        <taxon>Muroidea</taxon>
        <taxon>Muridae</taxon>
        <taxon>Murinae</taxon>
        <taxon>Mus</taxon>
        <taxon>Mus</taxon>
    </lineage>
</organism>
<proteinExistence type="evidence at protein level"/>
<keyword id="KW-0004">4Fe-4S</keyword>
<keyword id="KW-0007">Acetylation</keyword>
<keyword id="KW-0025">Alternative splicing</keyword>
<keyword id="KW-0342">GTP-binding</keyword>
<keyword id="KW-0408">Iron</keyword>
<keyword id="KW-0411">Iron-sulfur</keyword>
<keyword id="KW-0456">Lyase</keyword>
<keyword id="KW-0479">Metal-binding</keyword>
<keyword id="KW-0501">Molybdenum cofactor biosynthesis</keyword>
<keyword id="KW-0547">Nucleotide-binding</keyword>
<keyword id="KW-0597">Phosphoprotein</keyword>
<keyword id="KW-1185">Reference proteome</keyword>
<keyword id="KW-0949">S-adenosyl-L-methionine</keyword>
<reference key="1">
    <citation type="journal article" date="2009" name="PLoS Biol.">
        <title>Lineage-specific biology revealed by a finished genome assembly of the mouse.</title>
        <authorList>
            <person name="Church D.M."/>
            <person name="Goodstadt L."/>
            <person name="Hillier L.W."/>
            <person name="Zody M.C."/>
            <person name="Goldstein S."/>
            <person name="She X."/>
            <person name="Bult C.J."/>
            <person name="Agarwala R."/>
            <person name="Cherry J.L."/>
            <person name="DiCuccio M."/>
            <person name="Hlavina W."/>
            <person name="Kapustin Y."/>
            <person name="Meric P."/>
            <person name="Maglott D."/>
            <person name="Birtle Z."/>
            <person name="Marques A.C."/>
            <person name="Graves T."/>
            <person name="Zhou S."/>
            <person name="Teague B."/>
            <person name="Potamousis K."/>
            <person name="Churas C."/>
            <person name="Place M."/>
            <person name="Herschleb J."/>
            <person name="Runnheim R."/>
            <person name="Forrest D."/>
            <person name="Amos-Landgraf J."/>
            <person name="Schwartz D.C."/>
            <person name="Cheng Z."/>
            <person name="Lindblad-Toh K."/>
            <person name="Eichler E.E."/>
            <person name="Ponting C.P."/>
        </authorList>
    </citation>
    <scope>NUCLEOTIDE SEQUENCE [LARGE SCALE GENOMIC DNA]</scope>
    <source>
        <strain>C57BL/6J</strain>
    </source>
</reference>
<reference key="2">
    <citation type="journal article" date="2004" name="Genome Res.">
        <title>The status, quality, and expansion of the NIH full-length cDNA project: the Mammalian Gene Collection (MGC).</title>
        <authorList>
            <consortium name="The MGC Project Team"/>
        </authorList>
    </citation>
    <scope>NUCLEOTIDE SEQUENCE [LARGE SCALE MRNA] (ISOFORM 3)</scope>
    <scope>NUCLEOTIDE SEQUENCE [LARGE SCALE MRNA] OF 99-636 (ISOFORM MOCS1A)</scope>
    <scope>NUCLEOTIDE SEQUENCE [LARGE SCALE MRNA] OF 366-636 (ISOFORM MOCS1B)</scope>
    <source>
        <strain>FVB/N</strain>
        <tissue>Brain</tissue>
        <tissue>Liver</tissue>
    </source>
</reference>
<reference key="3">
    <citation type="journal article" date="2000" name="RNA">
        <title>Diverse splicing mechanisms fuse the evolutionarily conserved bicistronic MOCS1A and MOCS1B open reading frames.</title>
        <authorList>
            <person name="Gray T.A."/>
            <person name="Nicholls R.D."/>
        </authorList>
    </citation>
    <scope>NUCLEOTIDE SEQUENCE [MRNA] OF 250-636 (ISOFORM MOCS1A)</scope>
    <scope>NUCLEOTIDE SEQUENCE [MRNA] OF 388-594 (ISOFORM MOCS1B)</scope>
</reference>
<reference key="4">
    <citation type="journal article" date="2002" name="Hum. Mol. Genet.">
        <title>Molybdenum cofactor-deficient mice resemble the phenotype of human patients.</title>
        <authorList>
            <person name="Lee H.-J."/>
            <person name="Adham I.M."/>
            <person name="Schwarz G."/>
            <person name="Kneussel M."/>
            <person name="Sass J.O."/>
            <person name="Engel W."/>
            <person name="Reiss J."/>
        </authorList>
    </citation>
    <scope>DISRUPTION PHENOTYPE</scope>
</reference>
<reference key="5">
    <citation type="journal article" date="2005" name="Mol. Genet. Metab.">
        <title>The pathogenesis of molybdenum cofactor deficiency, its delay by maternal clearance, and its expression pattern in microarray analysis.</title>
        <authorList>
            <person name="Reiss J."/>
            <person name="Bonin M."/>
            <person name="Schwegler H."/>
            <person name="Sass J.O."/>
            <person name="Garattini E."/>
            <person name="Wagner S."/>
            <person name="Lee H.-J."/>
            <person name="Engel W."/>
            <person name="Riess O."/>
            <person name="Schwarz G."/>
        </authorList>
    </citation>
    <scope>DISRUPTION PHENOTYPE</scope>
</reference>
<reference key="6">
    <citation type="journal article" date="2007" name="Am. J. Hum. Genet.">
        <title>Long-term rescue of a lethal inherited disease by adeno-associated virus-mediated gene transfer in a mouse model of molybdenum-cofactor deficiency.</title>
        <authorList>
            <person name="Kuegler S."/>
            <person name="Hahnewald R."/>
            <person name="Garrido M."/>
            <person name="Reiss J."/>
        </authorList>
    </citation>
    <scope>DISRUPTION PHENOTYPE</scope>
</reference>
<reference key="7">
    <citation type="journal article" date="2010" name="Cell">
        <title>A tissue-specific atlas of mouse protein phosphorylation and expression.</title>
        <authorList>
            <person name="Huttlin E.L."/>
            <person name="Jedrychowski M.P."/>
            <person name="Elias J.E."/>
            <person name="Goswami T."/>
            <person name="Rad R."/>
            <person name="Beausoleil S.A."/>
            <person name="Villen J."/>
            <person name="Haas W."/>
            <person name="Sowa M.E."/>
            <person name="Gygi S.P."/>
        </authorList>
    </citation>
    <scope>IDENTIFICATION BY MASS SPECTROMETRY [LARGE SCALE ANALYSIS]</scope>
    <source>
        <tissue>Brown adipose tissue</tissue>
        <tissue>Heart</tissue>
        <tissue>Kidney</tissue>
        <tissue>Liver</tissue>
        <tissue>Spleen</tissue>
        <tissue>Testis</tissue>
    </source>
</reference>
<reference key="8">
    <citation type="journal article" date="2013" name="Proc. Natl. Acad. Sci. U.S.A.">
        <title>Label-free quantitative proteomics of the lysine acetylome in mitochondria identifies substrates of SIRT3 in metabolic pathways.</title>
        <authorList>
            <person name="Rardin M.J."/>
            <person name="Newman J.C."/>
            <person name="Held J.M."/>
            <person name="Cusack M.P."/>
            <person name="Sorensen D.J."/>
            <person name="Li B."/>
            <person name="Schilling B."/>
            <person name="Mooney S.D."/>
            <person name="Kahn C.R."/>
            <person name="Verdin E."/>
            <person name="Gibson B.W."/>
        </authorList>
    </citation>
    <scope>ACETYLATION [LARGE SCALE ANALYSIS] AT LYS-528</scope>
    <scope>IDENTIFICATION BY MASS SPECTROMETRY [LARGE SCALE ANALYSIS]</scope>
    <source>
        <tissue>Liver</tissue>
    </source>
</reference>
<name>MOCS1_MOUSE</name>